<accession>Q8XEZ7</accession>
<accession>Q7AN21</accession>
<feature type="chain" id="PRO_0000234616" description="Sulfurtransferase TusE">
    <location>
        <begin position="1"/>
        <end position="109"/>
    </location>
</feature>
<feature type="active site" description="Cysteine persulfide intermediate" evidence="1">
    <location>
        <position position="108"/>
    </location>
</feature>
<gene>
    <name type="primary">tusE</name>
    <name type="ordered locus">STY1111</name>
    <name type="ordered locus">t1835</name>
</gene>
<evidence type="ECO:0000250" key="1"/>
<evidence type="ECO:0000305" key="2"/>
<proteinExistence type="inferred from homology"/>
<reference key="1">
    <citation type="journal article" date="2001" name="Nature">
        <title>Complete genome sequence of a multiple drug resistant Salmonella enterica serovar Typhi CT18.</title>
        <authorList>
            <person name="Parkhill J."/>
            <person name="Dougan G."/>
            <person name="James K.D."/>
            <person name="Thomson N.R."/>
            <person name="Pickard D."/>
            <person name="Wain J."/>
            <person name="Churcher C.M."/>
            <person name="Mungall K.L."/>
            <person name="Bentley S.D."/>
            <person name="Holden M.T.G."/>
            <person name="Sebaihia M."/>
            <person name="Baker S."/>
            <person name="Basham D."/>
            <person name="Brooks K."/>
            <person name="Chillingworth T."/>
            <person name="Connerton P."/>
            <person name="Cronin A."/>
            <person name="Davis P."/>
            <person name="Davies R.M."/>
            <person name="Dowd L."/>
            <person name="White N."/>
            <person name="Farrar J."/>
            <person name="Feltwell T."/>
            <person name="Hamlin N."/>
            <person name="Haque A."/>
            <person name="Hien T.T."/>
            <person name="Holroyd S."/>
            <person name="Jagels K."/>
            <person name="Krogh A."/>
            <person name="Larsen T.S."/>
            <person name="Leather S."/>
            <person name="Moule S."/>
            <person name="O'Gaora P."/>
            <person name="Parry C."/>
            <person name="Quail M.A."/>
            <person name="Rutherford K.M."/>
            <person name="Simmonds M."/>
            <person name="Skelton J."/>
            <person name="Stevens K."/>
            <person name="Whitehead S."/>
            <person name="Barrell B.G."/>
        </authorList>
    </citation>
    <scope>NUCLEOTIDE SEQUENCE [LARGE SCALE GENOMIC DNA]</scope>
    <source>
        <strain>CT18</strain>
    </source>
</reference>
<reference key="2">
    <citation type="journal article" date="2003" name="J. Bacteriol.">
        <title>Comparative genomics of Salmonella enterica serovar Typhi strains Ty2 and CT18.</title>
        <authorList>
            <person name="Deng W."/>
            <person name="Liou S.-R."/>
            <person name="Plunkett G. III"/>
            <person name="Mayhew G.F."/>
            <person name="Rose D.J."/>
            <person name="Burland V."/>
            <person name="Kodoyianni V."/>
            <person name="Schwartz D.C."/>
            <person name="Blattner F.R."/>
        </authorList>
    </citation>
    <scope>NUCLEOTIDE SEQUENCE [LARGE SCALE GENOMIC DNA]</scope>
    <source>
        <strain>ATCC 700931 / Ty2</strain>
    </source>
</reference>
<name>TUSE_SALTI</name>
<organism>
    <name type="scientific">Salmonella typhi</name>
    <dbReference type="NCBI Taxonomy" id="90370"/>
    <lineage>
        <taxon>Bacteria</taxon>
        <taxon>Pseudomonadati</taxon>
        <taxon>Pseudomonadota</taxon>
        <taxon>Gammaproteobacteria</taxon>
        <taxon>Enterobacterales</taxon>
        <taxon>Enterobacteriaceae</taxon>
        <taxon>Salmonella</taxon>
    </lineage>
</organism>
<protein>
    <recommendedName>
        <fullName>Sulfurtransferase TusE</fullName>
        <ecNumber>2.8.1.-</ecNumber>
    </recommendedName>
    <alternativeName>
        <fullName>tRNA 2-thiouridine synthesizing protein E</fullName>
    </alternativeName>
</protein>
<dbReference type="EC" id="2.8.1.-"/>
<dbReference type="EMBL" id="AL513382">
    <property type="protein sequence ID" value="CAD08211.1"/>
    <property type="molecule type" value="Genomic_DNA"/>
</dbReference>
<dbReference type="EMBL" id="AE014613">
    <property type="protein sequence ID" value="AAO69455.1"/>
    <property type="molecule type" value="Genomic_DNA"/>
</dbReference>
<dbReference type="RefSeq" id="NP_455582.1">
    <property type="nucleotide sequence ID" value="NC_003198.1"/>
</dbReference>
<dbReference type="RefSeq" id="WP_000904446.1">
    <property type="nucleotide sequence ID" value="NZ_WSUR01000091.1"/>
</dbReference>
<dbReference type="SMR" id="Q8XEZ7"/>
<dbReference type="STRING" id="220341.gene:17585089"/>
<dbReference type="KEGG" id="stt:t1835"/>
<dbReference type="KEGG" id="sty:STY1111"/>
<dbReference type="PATRIC" id="fig|220341.7.peg.1115"/>
<dbReference type="eggNOG" id="COG2920">
    <property type="taxonomic scope" value="Bacteria"/>
</dbReference>
<dbReference type="HOGENOM" id="CLU_153199_1_0_6"/>
<dbReference type="OMA" id="LPKPTNC"/>
<dbReference type="OrthoDB" id="9786347at2"/>
<dbReference type="Proteomes" id="UP000000541">
    <property type="component" value="Chromosome"/>
</dbReference>
<dbReference type="Proteomes" id="UP000002670">
    <property type="component" value="Chromosome"/>
</dbReference>
<dbReference type="GO" id="GO:0005737">
    <property type="term" value="C:cytoplasm"/>
    <property type="evidence" value="ECO:0007669"/>
    <property type="project" value="UniProtKB-SubCell"/>
</dbReference>
<dbReference type="GO" id="GO:0097163">
    <property type="term" value="F:sulfur carrier activity"/>
    <property type="evidence" value="ECO:0007669"/>
    <property type="project" value="TreeGrafter"/>
</dbReference>
<dbReference type="GO" id="GO:0016740">
    <property type="term" value="F:transferase activity"/>
    <property type="evidence" value="ECO:0007669"/>
    <property type="project" value="UniProtKB-KW"/>
</dbReference>
<dbReference type="GO" id="GO:0002143">
    <property type="term" value="P:tRNA wobble position uridine thiolation"/>
    <property type="evidence" value="ECO:0007669"/>
    <property type="project" value="TreeGrafter"/>
</dbReference>
<dbReference type="FunFam" id="1.10.10.370:FF:000001">
    <property type="entry name" value="Sulfurtransferase"/>
    <property type="match status" value="1"/>
</dbReference>
<dbReference type="FunFam" id="3.30.1420.10:FF:000001">
    <property type="entry name" value="Sulfurtransferase"/>
    <property type="match status" value="1"/>
</dbReference>
<dbReference type="Gene3D" id="3.30.1420.10">
    <property type="match status" value="1"/>
</dbReference>
<dbReference type="Gene3D" id="1.10.10.370">
    <property type="entry name" value="DsrC-like protein, C-terminal domain"/>
    <property type="match status" value="1"/>
</dbReference>
<dbReference type="InterPro" id="IPR042072">
    <property type="entry name" value="DsrC-like_C"/>
</dbReference>
<dbReference type="InterPro" id="IPR025526">
    <property type="entry name" value="DsrC-like_dom_sf"/>
</dbReference>
<dbReference type="InterPro" id="IPR043163">
    <property type="entry name" value="DsrC-like_N"/>
</dbReference>
<dbReference type="InterPro" id="IPR007453">
    <property type="entry name" value="DsrC/TusE"/>
</dbReference>
<dbReference type="NCBIfam" id="TIGR03342">
    <property type="entry name" value="dsrC_tusE_dsvC"/>
    <property type="match status" value="1"/>
</dbReference>
<dbReference type="NCBIfam" id="NF008562">
    <property type="entry name" value="PRK11508.1"/>
    <property type="match status" value="1"/>
</dbReference>
<dbReference type="PANTHER" id="PTHR37010">
    <property type="entry name" value="SULFURTRANSFERASE TUSE"/>
    <property type="match status" value="1"/>
</dbReference>
<dbReference type="PANTHER" id="PTHR37010:SF1">
    <property type="entry name" value="SULFURTRANSFERASE TUSE"/>
    <property type="match status" value="1"/>
</dbReference>
<dbReference type="Pfam" id="PF04358">
    <property type="entry name" value="DsrC"/>
    <property type="match status" value="1"/>
</dbReference>
<dbReference type="PIRSF" id="PIRSF006223">
    <property type="entry name" value="DsrC_TusE"/>
    <property type="match status" value="1"/>
</dbReference>
<dbReference type="SUPFAM" id="SSF69721">
    <property type="entry name" value="DsrC, the gamma subunit of dissimilatory sulfite reductase"/>
    <property type="match status" value="1"/>
</dbReference>
<keyword id="KW-0963">Cytoplasm</keyword>
<keyword id="KW-0808">Transferase</keyword>
<keyword id="KW-0819">tRNA processing</keyword>
<sequence length="109" mass="12300">MLIFEGKEISTDSEGYLKETTQWSEALAVAIAANEGIELSAEHWEVVRFVREFYLEFNTSPAIRMLVKAMANKFGEEKGNSRYLYRLFPKGPAKQATKIAGLPKPVKCI</sequence>
<comment type="function">
    <text evidence="1">Part of a sulfur-relay system required for 2-thiolation of 5-methylaminomethyl-2-thiouridine (mnm(5)s(2)U) at tRNA wobble positions. Could accept sulfur from TusD (By similarity).</text>
</comment>
<comment type="subunit">
    <text evidence="1">Interacts with the TusBCD complex. Interacts with MnmA (By similarity).</text>
</comment>
<comment type="subcellular location">
    <subcellularLocation>
        <location evidence="1">Cytoplasm</location>
    </subcellularLocation>
</comment>
<comment type="similarity">
    <text evidence="2">Belongs to the DsrC/TusE family.</text>
</comment>